<proteinExistence type="inferred from homology"/>
<accession>Q0I1B6</accession>
<comment type="function">
    <text evidence="1">Required for the formation of a threonylcarbamoyl group on adenosine at position 37 (t(6)A37) in tRNAs that read codons beginning with adenine. Catalyzes the conversion of L-threonine, HCO(3)(-)/CO(2) and ATP to give threonylcarbamoyl-AMP (TC-AMP) as the acyladenylate intermediate, with the release of diphosphate.</text>
</comment>
<comment type="catalytic activity">
    <reaction evidence="1">
        <text>L-threonine + hydrogencarbonate + ATP = L-threonylcarbamoyladenylate + diphosphate + H2O</text>
        <dbReference type="Rhea" id="RHEA:36407"/>
        <dbReference type="ChEBI" id="CHEBI:15377"/>
        <dbReference type="ChEBI" id="CHEBI:17544"/>
        <dbReference type="ChEBI" id="CHEBI:30616"/>
        <dbReference type="ChEBI" id="CHEBI:33019"/>
        <dbReference type="ChEBI" id="CHEBI:57926"/>
        <dbReference type="ChEBI" id="CHEBI:73682"/>
        <dbReference type="EC" id="2.7.7.87"/>
    </reaction>
</comment>
<comment type="subcellular location">
    <subcellularLocation>
        <location evidence="1">Cytoplasm</location>
    </subcellularLocation>
</comment>
<comment type="similarity">
    <text evidence="1">Belongs to the SUA5 family. TsaC subfamily.</text>
</comment>
<comment type="sequence caution" evidence="2">
    <conflict type="erroneous initiation">
        <sequence resource="EMBL-CDS" id="ABI24288"/>
    </conflict>
</comment>
<evidence type="ECO:0000255" key="1">
    <source>
        <dbReference type="HAMAP-Rule" id="MF_01852"/>
    </source>
</evidence>
<evidence type="ECO:0000305" key="2"/>
<gene>
    <name evidence="1" type="primary">tsaC</name>
    <name type="synonym">rimN</name>
    <name type="ordered locus">HS_0007</name>
</gene>
<protein>
    <recommendedName>
        <fullName evidence="1">Threonylcarbamoyl-AMP synthase</fullName>
        <shortName evidence="1">TC-AMP synthase</shortName>
        <ecNumber evidence="1">2.7.7.87</ecNumber>
    </recommendedName>
    <alternativeName>
        <fullName evidence="1">L-threonylcarbamoyladenylate synthase</fullName>
    </alternativeName>
    <alternativeName>
        <fullName evidence="1">t(6)A37 threonylcarbamoyladenosine biosynthesis protein TsaC</fullName>
    </alternativeName>
    <alternativeName>
        <fullName evidence="1">tRNA threonylcarbamoyladenosine biosynthesis protein TsaC</fullName>
    </alternativeName>
</protein>
<feature type="chain" id="PRO_0000352926" description="Threonylcarbamoyl-AMP synthase">
    <location>
        <begin position="1"/>
        <end position="183"/>
    </location>
</feature>
<feature type="domain" description="YrdC-like" evidence="1">
    <location>
        <begin position="1"/>
        <end position="183"/>
    </location>
</feature>
<dbReference type="EC" id="2.7.7.87" evidence="1"/>
<dbReference type="EMBL" id="CP000436">
    <property type="protein sequence ID" value="ABI24288.1"/>
    <property type="status" value="ALT_INIT"/>
    <property type="molecule type" value="Genomic_DNA"/>
</dbReference>
<dbReference type="SMR" id="Q0I1B6"/>
<dbReference type="KEGG" id="hso:HS_0007"/>
<dbReference type="eggNOG" id="COG0009">
    <property type="taxonomic scope" value="Bacteria"/>
</dbReference>
<dbReference type="HOGENOM" id="CLU_031397_6_0_6"/>
<dbReference type="GO" id="GO:0005737">
    <property type="term" value="C:cytoplasm"/>
    <property type="evidence" value="ECO:0007669"/>
    <property type="project" value="UniProtKB-SubCell"/>
</dbReference>
<dbReference type="GO" id="GO:0005524">
    <property type="term" value="F:ATP binding"/>
    <property type="evidence" value="ECO:0007669"/>
    <property type="project" value="UniProtKB-UniRule"/>
</dbReference>
<dbReference type="GO" id="GO:0003725">
    <property type="term" value="F:double-stranded RNA binding"/>
    <property type="evidence" value="ECO:0007669"/>
    <property type="project" value="InterPro"/>
</dbReference>
<dbReference type="GO" id="GO:0061710">
    <property type="term" value="F:L-threonylcarbamoyladenylate synthase"/>
    <property type="evidence" value="ECO:0007669"/>
    <property type="project" value="UniProtKB-EC"/>
</dbReference>
<dbReference type="GO" id="GO:0000049">
    <property type="term" value="F:tRNA binding"/>
    <property type="evidence" value="ECO:0007669"/>
    <property type="project" value="TreeGrafter"/>
</dbReference>
<dbReference type="GO" id="GO:0006450">
    <property type="term" value="P:regulation of translational fidelity"/>
    <property type="evidence" value="ECO:0007669"/>
    <property type="project" value="TreeGrafter"/>
</dbReference>
<dbReference type="GO" id="GO:0002949">
    <property type="term" value="P:tRNA threonylcarbamoyladenosine modification"/>
    <property type="evidence" value="ECO:0007669"/>
    <property type="project" value="UniProtKB-UniRule"/>
</dbReference>
<dbReference type="FunFam" id="3.90.870.10:FF:000004">
    <property type="entry name" value="Threonylcarbamoyl-AMP synthase"/>
    <property type="match status" value="1"/>
</dbReference>
<dbReference type="Gene3D" id="3.90.870.10">
    <property type="entry name" value="DHBP synthase"/>
    <property type="match status" value="1"/>
</dbReference>
<dbReference type="HAMAP" id="MF_01852">
    <property type="entry name" value="TsaC"/>
    <property type="match status" value="1"/>
</dbReference>
<dbReference type="InterPro" id="IPR017945">
    <property type="entry name" value="DHBP_synth_RibB-like_a/b_dom"/>
</dbReference>
<dbReference type="InterPro" id="IPR006070">
    <property type="entry name" value="Sua5-like_dom"/>
</dbReference>
<dbReference type="InterPro" id="IPR023535">
    <property type="entry name" value="TC-AMP_synthase"/>
</dbReference>
<dbReference type="InterPro" id="IPR050156">
    <property type="entry name" value="TC-AMP_synthase_SUA5"/>
</dbReference>
<dbReference type="PANTHER" id="PTHR17490">
    <property type="entry name" value="SUA5"/>
    <property type="match status" value="1"/>
</dbReference>
<dbReference type="PANTHER" id="PTHR17490:SF18">
    <property type="entry name" value="THREONYLCARBAMOYL-AMP SYNTHASE"/>
    <property type="match status" value="1"/>
</dbReference>
<dbReference type="Pfam" id="PF01300">
    <property type="entry name" value="Sua5_yciO_yrdC"/>
    <property type="match status" value="1"/>
</dbReference>
<dbReference type="SUPFAM" id="SSF55821">
    <property type="entry name" value="YrdC/RibB"/>
    <property type="match status" value="1"/>
</dbReference>
<dbReference type="PROSITE" id="PS51163">
    <property type="entry name" value="YRDC"/>
    <property type="match status" value="1"/>
</dbReference>
<sequence length="183" mass="20454">MNITQIIEKLKQNEVVAYPTEAVFGLGCNPFSQSAVEKLLILKQRPREKGLILVAPKLDYFFSFIDKEQINSQHWQKLQQTYPRPITWIVPAKKDIAKFLCGNFNSIAIRVSQHPAIKILCEQTGFALTSTSANLSGIAPCKTSDEVRLQFGADFPVLDMSVGSAAKPSEIRDLFTNQLVRQG</sequence>
<name>TSAC_HISS1</name>
<keyword id="KW-0067">ATP-binding</keyword>
<keyword id="KW-0963">Cytoplasm</keyword>
<keyword id="KW-0547">Nucleotide-binding</keyword>
<keyword id="KW-0548">Nucleotidyltransferase</keyword>
<keyword id="KW-0808">Transferase</keyword>
<keyword id="KW-0819">tRNA processing</keyword>
<reference key="1">
    <citation type="journal article" date="2007" name="J. Bacteriol.">
        <title>Complete genome sequence of Haemophilus somnus (Histophilus somni) strain 129Pt and comparison to Haemophilus ducreyi 35000HP and Haemophilus influenzae Rd.</title>
        <authorList>
            <person name="Challacombe J.F."/>
            <person name="Duncan A.J."/>
            <person name="Brettin T.S."/>
            <person name="Bruce D."/>
            <person name="Chertkov O."/>
            <person name="Detter J.C."/>
            <person name="Han C.S."/>
            <person name="Misra M."/>
            <person name="Richardson P."/>
            <person name="Tapia R."/>
            <person name="Thayer N."/>
            <person name="Xie G."/>
            <person name="Inzana T.J."/>
        </authorList>
    </citation>
    <scope>NUCLEOTIDE SEQUENCE [LARGE SCALE GENOMIC DNA]</scope>
    <source>
        <strain>129Pt</strain>
    </source>
</reference>
<organism>
    <name type="scientific">Histophilus somni (strain 129Pt)</name>
    <name type="common">Haemophilus somnus</name>
    <dbReference type="NCBI Taxonomy" id="205914"/>
    <lineage>
        <taxon>Bacteria</taxon>
        <taxon>Pseudomonadati</taxon>
        <taxon>Pseudomonadota</taxon>
        <taxon>Gammaproteobacteria</taxon>
        <taxon>Pasteurellales</taxon>
        <taxon>Pasteurellaceae</taxon>
        <taxon>Histophilus</taxon>
    </lineage>
</organism>